<name>RDRP_HV19S</name>
<sequence length="835" mass="91320">MSDPQERSKAYGLLGERLYAVASANSHMLAGYDSLDFTARLVRLTGEATALKAVDPLLPCAVSLLFMDFPLQLPCTPEETLRLVRRAYDPNTLEEVDYSTLSGYATQFARVKGQRGRWRHLGHLVCNDKAFRERYFPKKKHAAAAIKTNIRLGPLARAWAARYGLAALGSHLAYMVGMPNDRACATLLLAQTYKARFGSEGVAWAIASVRQPENAKGLSNALKALGSNTSEPGALFVEANTLQGRYDRTLDMDHEVESRCSPAAIADQVIPYTDELGACIDFILDTELGGDTIELPDEDEWWTSRWLWCVNGSQNALSDKALGIKNKSGQRYRRMAAEEVNNNPVPAWNGHTSVSPSVKLENGKDRAIFACDTRSYFAFTYWLTPIEKKWRGARVILNPGEGGLYGTARRIRGSQTSGGVNLMLDYDNFNSQHSNETMAALYEKALSRTNAPAYLKKAVAASVESTYIHYKGRDRHVLGTLMSGHRATTFTNSVLNAAYICYAVGIPAFKRMISLHAGDDVYLRLPTLADCATTLNNTKRVGCRMNPTKQSIGYTGAEFLRLGINKSYAIGYLCRAIASLVSGSWTSLDELQPLNALNGAIVQTRSCLNRGAATGLPELISASFVGLRGFKRRDLLELLTGVATIKPGPVYTSSCVIREYVVEQPPPPQFDVPPGAGMHATMSYLARHTTLVEAQALEIARPAIKSLMLSSSYGKAGPGAQTRPHVPMPKLRRQPPRVAVGFSMAHELTGRGVKEGCLSGHPLLRLFEQRLTDDDLRALVALVGGNTSAKDIRAEAFGAESSSSTIMGILPHSDASNYCKRTRNGNIIVPYHIRS</sequence>
<protein>
    <recommendedName>
        <fullName>Probable RNA-directed RNA polymerase</fullName>
        <ecNumber>2.7.7.48</ecNumber>
    </recommendedName>
</protein>
<accession>O57044</accession>
<reference key="1">
    <citation type="journal article" date="1996" name="Proc. Natl. Acad. Sci. U.S.A.">
        <title>Organization and expression of the double-stranded RNA genome of Helminthosporium victoriae 190S virus, a totivirus infecting a plant pathogenic filamentous fungus.</title>
        <authorList>
            <person name="Huang S."/>
            <person name="Ghabrial S.A."/>
        </authorList>
    </citation>
    <scope>NUCLEOTIDE SEQUENCE [GENOMIC RNA]</scope>
</reference>
<reference key="2">
    <citation type="submission" date="1998-01" db="EMBL/GenBank/DDBJ databases">
        <title>Victorivirus: a new genus in the family Totiviridae.</title>
        <authorList>
            <person name="Ghbarial S.A."/>
            <person name="Nibert M."/>
            <person name="Xu L.L."/>
            <person name="Talkington M.W.T."/>
        </authorList>
    </citation>
    <scope>NUCLEOTIDE SEQUENCE [GENOMIC RNA]</scope>
</reference>
<reference key="3">
    <citation type="journal article" date="2000" name="J. Virol.">
        <title>Expression of the Totivirus Helminthosporium victoriae 190S virus RNA-dependent RNA polymerase from its downstream open reading frame in dicistronic constructs.</title>
        <authorList>
            <person name="Soldevila A.I."/>
            <person name="Ghabrial S.A."/>
        </authorList>
    </citation>
    <scope>EXPRESSION</scope>
</reference>
<proteinExistence type="inferred from homology"/>
<organism>
    <name type="scientific">Helminthosporium victoriae virus-190S</name>
    <name type="common">Hv190SV</name>
    <dbReference type="NCBI Taxonomy" id="45237"/>
    <lineage>
        <taxon>Viruses</taxon>
        <taxon>Riboviria</taxon>
        <taxon>Orthornavirae</taxon>
        <taxon>Duplornaviricota</taxon>
        <taxon>Chrymotiviricetes</taxon>
        <taxon>Ghabrivirales</taxon>
        <taxon>Totiviridae</taxon>
        <taxon>Victorivirus</taxon>
    </lineage>
</organism>
<dbReference type="EC" id="2.7.7.48"/>
<dbReference type="EMBL" id="U41345">
    <property type="protein sequence ID" value="AAB94791.2"/>
    <property type="molecule type" value="Genomic_RNA"/>
</dbReference>
<dbReference type="RefSeq" id="NP_619670.2">
    <property type="nucleotide sequence ID" value="NC_003607.2"/>
</dbReference>
<dbReference type="GeneID" id="940192"/>
<dbReference type="KEGG" id="vg:940192"/>
<dbReference type="OrthoDB" id="9167at10239"/>
<dbReference type="Proteomes" id="UP000000352">
    <property type="component" value="Segment"/>
</dbReference>
<dbReference type="GO" id="GO:0016787">
    <property type="term" value="F:hydrolase activity"/>
    <property type="evidence" value="ECO:0007669"/>
    <property type="project" value="UniProtKB-KW"/>
</dbReference>
<dbReference type="GO" id="GO:0000166">
    <property type="term" value="F:nucleotide binding"/>
    <property type="evidence" value="ECO:0007669"/>
    <property type="project" value="UniProtKB-KW"/>
</dbReference>
<dbReference type="GO" id="GO:0003723">
    <property type="term" value="F:RNA binding"/>
    <property type="evidence" value="ECO:0007669"/>
    <property type="project" value="UniProtKB-KW"/>
</dbReference>
<dbReference type="GO" id="GO:0003968">
    <property type="term" value="F:RNA-directed RNA polymerase activity"/>
    <property type="evidence" value="ECO:0007669"/>
    <property type="project" value="UniProtKB-KW"/>
</dbReference>
<dbReference type="GO" id="GO:0006351">
    <property type="term" value="P:DNA-templated transcription"/>
    <property type="evidence" value="ECO:0007669"/>
    <property type="project" value="InterPro"/>
</dbReference>
<dbReference type="InterPro" id="IPR043502">
    <property type="entry name" value="DNA/RNA_pol_sf"/>
</dbReference>
<dbReference type="InterPro" id="IPR001795">
    <property type="entry name" value="RNA-dir_pol_luteovirus"/>
</dbReference>
<dbReference type="Pfam" id="PF02123">
    <property type="entry name" value="RdRP_4"/>
    <property type="match status" value="1"/>
</dbReference>
<dbReference type="SUPFAM" id="SSF56672">
    <property type="entry name" value="DNA/RNA polymerases"/>
    <property type="match status" value="1"/>
</dbReference>
<feature type="chain" id="PRO_0000404512" description="Probable RNA-directed RNA polymerase">
    <location>
        <begin position="1"/>
        <end position="835"/>
    </location>
</feature>
<evidence type="ECO:0000250" key="1"/>
<evidence type="ECO:0000305" key="2"/>
<comment type="function">
    <text evidence="1">RNA-dependent RNA polymerase which replicates the viral genome. Catalyzes the transcription of fully conservative plus-strand genomic RNAs that are extruded from the virion into the cytoplasm where they function as mRNAs for translation of viral proteins and also as substrates for encapsidation to form new virions. Once encapsidated, the positive strand is converted to dsRNA by the RNA-directed RNA polymerase (By similarity).</text>
</comment>
<comment type="catalytic activity">
    <reaction>
        <text>RNA(n) + a ribonucleoside 5'-triphosphate = RNA(n+1) + diphosphate</text>
        <dbReference type="Rhea" id="RHEA:21248"/>
        <dbReference type="Rhea" id="RHEA-COMP:14527"/>
        <dbReference type="Rhea" id="RHEA-COMP:17342"/>
        <dbReference type="ChEBI" id="CHEBI:33019"/>
        <dbReference type="ChEBI" id="CHEBI:61557"/>
        <dbReference type="ChEBI" id="CHEBI:140395"/>
        <dbReference type="EC" id="2.7.7.48"/>
    </reaction>
</comment>
<comment type="miscellaneous">
    <text>RDRP is released as a separate protein consequent to an apparently coupled termination-reinitiation mechanism.</text>
</comment>
<comment type="similarity">
    <text evidence="2">Belongs to the totiviridae RNA-directed RNA polymerase family.</text>
</comment>
<keyword id="KW-0378">Hydrolase</keyword>
<keyword id="KW-0547">Nucleotide-binding</keyword>
<keyword id="KW-0548">Nucleotidyltransferase</keyword>
<keyword id="KW-1185">Reference proteome</keyword>
<keyword id="KW-0694">RNA-binding</keyword>
<keyword id="KW-0696">RNA-directed RNA polymerase</keyword>
<keyword id="KW-0808">Transferase</keyword>
<keyword id="KW-0693">Viral RNA replication</keyword>